<reference key="1">
    <citation type="journal article" date="2004" name="Nature">
        <title>Genome evolution in yeasts.</title>
        <authorList>
            <person name="Dujon B."/>
            <person name="Sherman D."/>
            <person name="Fischer G."/>
            <person name="Durrens P."/>
            <person name="Casaregola S."/>
            <person name="Lafontaine I."/>
            <person name="de Montigny J."/>
            <person name="Marck C."/>
            <person name="Neuveglise C."/>
            <person name="Talla E."/>
            <person name="Goffard N."/>
            <person name="Frangeul L."/>
            <person name="Aigle M."/>
            <person name="Anthouard V."/>
            <person name="Babour A."/>
            <person name="Barbe V."/>
            <person name="Barnay S."/>
            <person name="Blanchin S."/>
            <person name="Beckerich J.-M."/>
            <person name="Beyne E."/>
            <person name="Bleykasten C."/>
            <person name="Boisrame A."/>
            <person name="Boyer J."/>
            <person name="Cattolico L."/>
            <person name="Confanioleri F."/>
            <person name="de Daruvar A."/>
            <person name="Despons L."/>
            <person name="Fabre E."/>
            <person name="Fairhead C."/>
            <person name="Ferry-Dumazet H."/>
            <person name="Groppi A."/>
            <person name="Hantraye F."/>
            <person name="Hennequin C."/>
            <person name="Jauniaux N."/>
            <person name="Joyet P."/>
            <person name="Kachouri R."/>
            <person name="Kerrest A."/>
            <person name="Koszul R."/>
            <person name="Lemaire M."/>
            <person name="Lesur I."/>
            <person name="Ma L."/>
            <person name="Muller H."/>
            <person name="Nicaud J.-M."/>
            <person name="Nikolski M."/>
            <person name="Oztas S."/>
            <person name="Ozier-Kalogeropoulos O."/>
            <person name="Pellenz S."/>
            <person name="Potier S."/>
            <person name="Richard G.-F."/>
            <person name="Straub M.-L."/>
            <person name="Suleau A."/>
            <person name="Swennen D."/>
            <person name="Tekaia F."/>
            <person name="Wesolowski-Louvel M."/>
            <person name="Westhof E."/>
            <person name="Wirth B."/>
            <person name="Zeniou-Meyer M."/>
            <person name="Zivanovic Y."/>
            <person name="Bolotin-Fukuhara M."/>
            <person name="Thierry A."/>
            <person name="Bouchier C."/>
            <person name="Caudron B."/>
            <person name="Scarpelli C."/>
            <person name="Gaillardin C."/>
            <person name="Weissenbach J."/>
            <person name="Wincker P."/>
            <person name="Souciet J.-L."/>
        </authorList>
    </citation>
    <scope>NUCLEOTIDE SEQUENCE [LARGE SCALE GENOMIC DNA]</scope>
    <source>
        <strain>ATCC 8585 / CBS 2359 / DSM 70799 / NBRC 1267 / NRRL Y-1140 / WM37</strain>
    </source>
</reference>
<feature type="chain" id="PRO_0000343020" description="Golgi apparatus membrane protein TVP18">
    <location>
        <begin position="1"/>
        <end position="171"/>
    </location>
</feature>
<feature type="transmembrane region" description="Helical" evidence="2">
    <location>
        <begin position="25"/>
        <end position="45"/>
    </location>
</feature>
<feature type="transmembrane region" description="Helical" evidence="2">
    <location>
        <begin position="51"/>
        <end position="71"/>
    </location>
</feature>
<feature type="transmembrane region" description="Helical" evidence="2">
    <location>
        <begin position="96"/>
        <end position="115"/>
    </location>
</feature>
<feature type="transmembrane region" description="Helical" evidence="2">
    <location>
        <begin position="120"/>
        <end position="142"/>
    </location>
</feature>
<feature type="glycosylation site" description="N-linked (GlcNAc...) asparagine" evidence="2">
    <location>
        <position position="12"/>
    </location>
</feature>
<feature type="glycosylation site" description="N-linked (GlcNAc...) asparagine" evidence="2">
    <location>
        <position position="24"/>
    </location>
</feature>
<organism>
    <name type="scientific">Kluyveromyces lactis (strain ATCC 8585 / CBS 2359 / DSM 70799 / NBRC 1267 / NRRL Y-1140 / WM37)</name>
    <name type="common">Yeast</name>
    <name type="synonym">Candida sphaerica</name>
    <dbReference type="NCBI Taxonomy" id="284590"/>
    <lineage>
        <taxon>Eukaryota</taxon>
        <taxon>Fungi</taxon>
        <taxon>Dikarya</taxon>
        <taxon>Ascomycota</taxon>
        <taxon>Saccharomycotina</taxon>
        <taxon>Saccharomycetes</taxon>
        <taxon>Saccharomycetales</taxon>
        <taxon>Saccharomycetaceae</taxon>
        <taxon>Kluyveromyces</taxon>
    </lineage>
</organism>
<keyword id="KW-0325">Glycoprotein</keyword>
<keyword id="KW-0333">Golgi apparatus</keyword>
<keyword id="KW-0472">Membrane</keyword>
<keyword id="KW-1185">Reference proteome</keyword>
<keyword id="KW-0812">Transmembrane</keyword>
<keyword id="KW-1133">Transmembrane helix</keyword>
<name>TVP18_KLULA</name>
<gene>
    <name type="primary">TVP18</name>
    <name type="ordered locus">KLLA0E18623g</name>
</gene>
<protein>
    <recommendedName>
        <fullName>Golgi apparatus membrane protein TVP18</fullName>
    </recommendedName>
</protein>
<accession>Q6CMQ1</accession>
<sequence>MVSVGFLKSMFNVSGMVADLKSSNFSIYGQWISYLNIIFCLAFGIANIFHFSAVIVFSIIAIVQGLIILFIEVPFLLKICPLSDNFIGFVSKFDTNLRRALFYLVMCAIQWCSIIVQSTSLIVVAVGLSITATVYALGAAAGQEFKNSAILSDRGRVAASVTNEAVVRDML</sequence>
<evidence type="ECO:0000250" key="1"/>
<evidence type="ECO:0000255" key="2"/>
<evidence type="ECO:0000305" key="3"/>
<comment type="function">
    <text evidence="1">Golgi membrane protein involved in vesicular trafficking.</text>
</comment>
<comment type="subcellular location">
    <subcellularLocation>
        <location evidence="1">Golgi apparatus membrane</location>
        <topology evidence="1">Multi-pass membrane protein</topology>
    </subcellularLocation>
</comment>
<comment type="similarity">
    <text evidence="3">Belongs to the TVP18 family.</text>
</comment>
<dbReference type="EMBL" id="CR382125">
    <property type="protein sequence ID" value="CAG99875.1"/>
    <property type="molecule type" value="Genomic_DNA"/>
</dbReference>
<dbReference type="RefSeq" id="XP_454788.1">
    <property type="nucleotide sequence ID" value="XM_454788.1"/>
</dbReference>
<dbReference type="FunCoup" id="Q6CMQ1">
    <property type="interactions" value="66"/>
</dbReference>
<dbReference type="STRING" id="284590.Q6CMQ1"/>
<dbReference type="GlyCosmos" id="Q6CMQ1">
    <property type="glycosylation" value="2 sites, No reported glycans"/>
</dbReference>
<dbReference type="PaxDb" id="284590-Q6CMQ1"/>
<dbReference type="KEGG" id="kla:KLLA0_E18525g"/>
<dbReference type="eggNOG" id="ENOG502S3AC">
    <property type="taxonomic scope" value="Eukaryota"/>
</dbReference>
<dbReference type="HOGENOM" id="CLU_118698_1_0_1"/>
<dbReference type="InParanoid" id="Q6CMQ1"/>
<dbReference type="OMA" id="IYAQWLG"/>
<dbReference type="Proteomes" id="UP000000598">
    <property type="component" value="Chromosome E"/>
</dbReference>
<dbReference type="GO" id="GO:0000139">
    <property type="term" value="C:Golgi membrane"/>
    <property type="evidence" value="ECO:0007669"/>
    <property type="project" value="UniProtKB-SubCell"/>
</dbReference>
<dbReference type="GO" id="GO:0016192">
    <property type="term" value="P:vesicle-mediated transport"/>
    <property type="evidence" value="ECO:0007669"/>
    <property type="project" value="TreeGrafter"/>
</dbReference>
<dbReference type="InterPro" id="IPR019365">
    <property type="entry name" value="TVP18/Ca-channel_flower"/>
</dbReference>
<dbReference type="PANTHER" id="PTHR13314">
    <property type="entry name" value="CALCIUM CHANNEL FLOWER HOMOLOG"/>
    <property type="match status" value="1"/>
</dbReference>
<dbReference type="PANTHER" id="PTHR13314:SF2">
    <property type="entry name" value="CALCIUM CHANNEL FLOWER HOMOLOG"/>
    <property type="match status" value="1"/>
</dbReference>
<dbReference type="Pfam" id="PF10233">
    <property type="entry name" value="Cg6151-P"/>
    <property type="match status" value="1"/>
</dbReference>
<dbReference type="SMART" id="SM01077">
    <property type="entry name" value="Cg6151-P"/>
    <property type="match status" value="1"/>
</dbReference>
<proteinExistence type="inferred from homology"/>